<reference key="1">
    <citation type="journal article" date="1991" name="Plant Cell">
        <title>Plant enolase: gene structure, expression, and evolution.</title>
        <authorList>
            <person name="van der Straeten D."/>
            <person name="Rodrigues-Pousada R.A."/>
            <person name="Goodman H.M."/>
            <person name="van Montagu M."/>
        </authorList>
    </citation>
    <scope>NUCLEOTIDE SEQUENCE [MRNA]</scope>
    <scope>CATALYTIC ACTIVITY</scope>
    <scope>PATHWAY</scope>
    <source>
        <strain>cv. Supersonic</strain>
    </source>
</reference>
<accession>P26300</accession>
<organism>
    <name type="scientific">Solanum lycopersicum</name>
    <name type="common">Tomato</name>
    <name type="synonym">Lycopersicon esculentum</name>
    <dbReference type="NCBI Taxonomy" id="4081"/>
    <lineage>
        <taxon>Eukaryota</taxon>
        <taxon>Viridiplantae</taxon>
        <taxon>Streptophyta</taxon>
        <taxon>Embryophyta</taxon>
        <taxon>Tracheophyta</taxon>
        <taxon>Spermatophyta</taxon>
        <taxon>Magnoliopsida</taxon>
        <taxon>eudicotyledons</taxon>
        <taxon>Gunneridae</taxon>
        <taxon>Pentapetalae</taxon>
        <taxon>asterids</taxon>
        <taxon>lamiids</taxon>
        <taxon>Solanales</taxon>
        <taxon>Solanaceae</taxon>
        <taxon>Solanoideae</taxon>
        <taxon>Solaneae</taxon>
        <taxon>Solanum</taxon>
        <taxon>Solanum subgen. Lycopersicon</taxon>
    </lineage>
</organism>
<proteinExistence type="evidence at protein level"/>
<feature type="chain" id="PRO_0000134072" description="Enolase">
    <location>
        <begin position="1"/>
        <end position="444"/>
    </location>
</feature>
<feature type="active site" description="Proton donor" evidence="1">
    <location>
        <position position="215"/>
    </location>
</feature>
<feature type="active site" description="Proton acceptor" evidence="1">
    <location>
        <position position="352"/>
    </location>
</feature>
<feature type="binding site" evidence="1">
    <location>
        <position position="163"/>
    </location>
    <ligand>
        <name>substrate</name>
    </ligand>
</feature>
<feature type="binding site" evidence="1">
    <location>
        <position position="172"/>
    </location>
    <ligand>
        <name>substrate</name>
    </ligand>
</feature>
<feature type="binding site" evidence="1">
    <location>
        <position position="250"/>
    </location>
    <ligand>
        <name>Mg(2+)</name>
        <dbReference type="ChEBI" id="CHEBI:18420"/>
    </ligand>
</feature>
<feature type="binding site" evidence="1">
    <location>
        <position position="300"/>
    </location>
    <ligand>
        <name>Mg(2+)</name>
        <dbReference type="ChEBI" id="CHEBI:18420"/>
    </ligand>
</feature>
<feature type="binding site" evidence="1">
    <location>
        <position position="300"/>
    </location>
    <ligand>
        <name>substrate</name>
    </ligand>
</feature>
<feature type="binding site" evidence="1">
    <location>
        <position position="327"/>
    </location>
    <ligand>
        <name>Mg(2+)</name>
        <dbReference type="ChEBI" id="CHEBI:18420"/>
    </ligand>
</feature>
<feature type="binding site" evidence="1">
    <location>
        <position position="327"/>
    </location>
    <ligand>
        <name>substrate</name>
    </ligand>
</feature>
<feature type="binding site" evidence="1">
    <location>
        <begin position="379"/>
        <end position="382"/>
    </location>
    <ligand>
        <name>substrate</name>
    </ligand>
</feature>
<feature type="binding site" evidence="1">
    <location>
        <position position="403"/>
    </location>
    <ligand>
        <name>substrate</name>
    </ligand>
</feature>
<sequence length="444" mass="47798">MATIKSIKARQIFDSRGNPTVEVDVHISNGVFARAAVPSGASTGIYEALELRDGGSDYLGKGVSKAVNNVNSIIGPALVGKDPTDQTGLDNFMVHQLDGTQNEWGWCKEKLGANAILAVSLAVCKAGAAVRNVPLYKHIADLAGNKKLVLPVPAFNVINGGSHAGNKLAMQEFMILPVGAANFKEAMKMGCEVYHHLKAVIKKKYGQDATNVGDEGGFAPNIQENKEGLELLKTAIEKAGYTGKVVIGMDVAASEFYGKDKSYDLNFKEESNDGSQKISGDQLKDLYKSFVSEYPIVSIEDPFDQDDWETYAKLTAEIGEQVQIVGDDLLVTNPKRVAKAIAEKTCNALLLKVNQIGSVTESIEAVKMSKKAGWGVMTSHRSGETEDTFIADLAVGLSTGQIKTGAPCRSERLAKYNQLLRIEEELGSEAVYAGASFRKPVEPY</sequence>
<comment type="catalytic activity">
    <reaction evidence="2">
        <text>(2R)-2-phosphoglycerate = phosphoenolpyruvate + H2O</text>
        <dbReference type="Rhea" id="RHEA:10164"/>
        <dbReference type="ChEBI" id="CHEBI:15377"/>
        <dbReference type="ChEBI" id="CHEBI:58289"/>
        <dbReference type="ChEBI" id="CHEBI:58702"/>
        <dbReference type="EC" id="4.2.1.11"/>
    </reaction>
    <physiologicalReaction direction="left-to-right" evidence="2">
        <dbReference type="Rhea" id="RHEA:10165"/>
    </physiologicalReaction>
</comment>
<comment type="cofactor">
    <cofactor evidence="1">
        <name>Mg(2+)</name>
        <dbReference type="ChEBI" id="CHEBI:18420"/>
    </cofactor>
    <text evidence="1">Mg(2+) is required for catalysis and for stabilizing the dimer.</text>
</comment>
<comment type="pathway">
    <text evidence="2">Carbohydrate degradation; glycolysis; pyruvate from D-glyceraldehyde 3-phosphate: step 4/5.</text>
</comment>
<comment type="subunit">
    <text evidence="1">Homodimer.</text>
</comment>
<comment type="subcellular location">
    <subcellularLocation>
        <location>Cytoplasm</location>
    </subcellularLocation>
</comment>
<comment type="similarity">
    <text evidence="4">Belongs to the enolase family.</text>
</comment>
<gene>
    <name type="primary">PGH1</name>
</gene>
<dbReference type="EC" id="4.2.1.11" evidence="2"/>
<dbReference type="EMBL" id="X58108">
    <property type="protein sequence ID" value="CAA41115.1"/>
    <property type="molecule type" value="mRNA"/>
</dbReference>
<dbReference type="PIR" id="JQ1185">
    <property type="entry name" value="JQ1185"/>
</dbReference>
<dbReference type="RefSeq" id="NP_001234080.1">
    <property type="nucleotide sequence ID" value="NM_001247151.2"/>
</dbReference>
<dbReference type="SMR" id="P26300"/>
<dbReference type="FunCoup" id="P26300">
    <property type="interactions" value="1972"/>
</dbReference>
<dbReference type="STRING" id="4081.P26300"/>
<dbReference type="PaxDb" id="4081-Solyc09g009020.2.1"/>
<dbReference type="EnsemblPlants" id="Solyc09g009020.3.1">
    <property type="protein sequence ID" value="Solyc09g009020.3.1"/>
    <property type="gene ID" value="Solyc09g009020.3"/>
</dbReference>
<dbReference type="GeneID" id="544068"/>
<dbReference type="Gramene" id="Solyc09g009020.3.1">
    <property type="protein sequence ID" value="Solyc09g009020.3.1"/>
    <property type="gene ID" value="Solyc09g009020.3"/>
</dbReference>
<dbReference type="KEGG" id="sly:544068"/>
<dbReference type="eggNOG" id="KOG2670">
    <property type="taxonomic scope" value="Eukaryota"/>
</dbReference>
<dbReference type="HOGENOM" id="CLU_031223_0_0_1"/>
<dbReference type="InParanoid" id="P26300"/>
<dbReference type="OMA" id="NRCKLAQ"/>
<dbReference type="OrthoDB" id="1739814at2759"/>
<dbReference type="PhylomeDB" id="P26300"/>
<dbReference type="UniPathway" id="UPA00109">
    <property type="reaction ID" value="UER00187"/>
</dbReference>
<dbReference type="Proteomes" id="UP000004994">
    <property type="component" value="Chromosome 9"/>
</dbReference>
<dbReference type="ExpressionAtlas" id="P26300">
    <property type="expression patterns" value="baseline and differential"/>
</dbReference>
<dbReference type="GO" id="GO:0000015">
    <property type="term" value="C:phosphopyruvate hydratase complex"/>
    <property type="evidence" value="ECO:0000318"/>
    <property type="project" value="GO_Central"/>
</dbReference>
<dbReference type="GO" id="GO:0000287">
    <property type="term" value="F:magnesium ion binding"/>
    <property type="evidence" value="ECO:0007669"/>
    <property type="project" value="InterPro"/>
</dbReference>
<dbReference type="GO" id="GO:0004634">
    <property type="term" value="F:phosphopyruvate hydratase activity"/>
    <property type="evidence" value="ECO:0000318"/>
    <property type="project" value="GO_Central"/>
</dbReference>
<dbReference type="GO" id="GO:0006096">
    <property type="term" value="P:glycolytic process"/>
    <property type="evidence" value="ECO:0000318"/>
    <property type="project" value="GO_Central"/>
</dbReference>
<dbReference type="CDD" id="cd03313">
    <property type="entry name" value="enolase"/>
    <property type="match status" value="1"/>
</dbReference>
<dbReference type="FunFam" id="3.30.390.10:FF:000001">
    <property type="entry name" value="Enolase"/>
    <property type="match status" value="1"/>
</dbReference>
<dbReference type="FunFam" id="3.20.20.120:FF:000002">
    <property type="entry name" value="Enolase 1"/>
    <property type="match status" value="1"/>
</dbReference>
<dbReference type="Gene3D" id="3.20.20.120">
    <property type="entry name" value="Enolase-like C-terminal domain"/>
    <property type="match status" value="1"/>
</dbReference>
<dbReference type="Gene3D" id="3.30.390.10">
    <property type="entry name" value="Enolase-like, N-terminal domain"/>
    <property type="match status" value="1"/>
</dbReference>
<dbReference type="HAMAP" id="MF_00318">
    <property type="entry name" value="Enolase"/>
    <property type="match status" value="1"/>
</dbReference>
<dbReference type="InterPro" id="IPR000941">
    <property type="entry name" value="Enolase"/>
</dbReference>
<dbReference type="InterPro" id="IPR036849">
    <property type="entry name" value="Enolase-like_C_sf"/>
</dbReference>
<dbReference type="InterPro" id="IPR029017">
    <property type="entry name" value="Enolase-like_N"/>
</dbReference>
<dbReference type="InterPro" id="IPR020810">
    <property type="entry name" value="Enolase_C"/>
</dbReference>
<dbReference type="InterPro" id="IPR020809">
    <property type="entry name" value="Enolase_CS"/>
</dbReference>
<dbReference type="InterPro" id="IPR020811">
    <property type="entry name" value="Enolase_N"/>
</dbReference>
<dbReference type="NCBIfam" id="TIGR01060">
    <property type="entry name" value="eno"/>
    <property type="match status" value="1"/>
</dbReference>
<dbReference type="PANTHER" id="PTHR11902">
    <property type="entry name" value="ENOLASE"/>
    <property type="match status" value="1"/>
</dbReference>
<dbReference type="PANTHER" id="PTHR11902:SF53">
    <property type="entry name" value="ENOLASE"/>
    <property type="match status" value="1"/>
</dbReference>
<dbReference type="Pfam" id="PF00113">
    <property type="entry name" value="Enolase_C"/>
    <property type="match status" value="1"/>
</dbReference>
<dbReference type="Pfam" id="PF03952">
    <property type="entry name" value="Enolase_N"/>
    <property type="match status" value="1"/>
</dbReference>
<dbReference type="PIRSF" id="PIRSF001400">
    <property type="entry name" value="Enolase"/>
    <property type="match status" value="1"/>
</dbReference>
<dbReference type="PRINTS" id="PR00148">
    <property type="entry name" value="ENOLASE"/>
</dbReference>
<dbReference type="SFLD" id="SFLDS00001">
    <property type="entry name" value="Enolase"/>
    <property type="match status" value="1"/>
</dbReference>
<dbReference type="SFLD" id="SFLDF00002">
    <property type="entry name" value="enolase"/>
    <property type="match status" value="1"/>
</dbReference>
<dbReference type="SMART" id="SM01192">
    <property type="entry name" value="Enolase_C"/>
    <property type="match status" value="1"/>
</dbReference>
<dbReference type="SMART" id="SM01193">
    <property type="entry name" value="Enolase_N"/>
    <property type="match status" value="1"/>
</dbReference>
<dbReference type="SUPFAM" id="SSF51604">
    <property type="entry name" value="Enolase C-terminal domain-like"/>
    <property type="match status" value="1"/>
</dbReference>
<dbReference type="SUPFAM" id="SSF54826">
    <property type="entry name" value="Enolase N-terminal domain-like"/>
    <property type="match status" value="1"/>
</dbReference>
<dbReference type="PROSITE" id="PS00164">
    <property type="entry name" value="ENOLASE"/>
    <property type="match status" value="1"/>
</dbReference>
<name>ENO_SOLLC</name>
<keyword id="KW-0963">Cytoplasm</keyword>
<keyword id="KW-0324">Glycolysis</keyword>
<keyword id="KW-0456">Lyase</keyword>
<keyword id="KW-0460">Magnesium</keyword>
<keyword id="KW-0479">Metal-binding</keyword>
<keyword id="KW-1185">Reference proteome</keyword>
<evidence type="ECO:0000250" key="1"/>
<evidence type="ECO:0000269" key="2">
    <source>
    </source>
</evidence>
<evidence type="ECO:0000303" key="3">
    <source>
    </source>
</evidence>
<evidence type="ECO:0000305" key="4"/>
<protein>
    <recommendedName>
        <fullName evidence="3">Enolase</fullName>
        <ecNumber evidence="2">4.2.1.11</ecNumber>
    </recommendedName>
    <alternativeName>
        <fullName>2-phospho-D-glycerate hydro-lyase</fullName>
    </alternativeName>
    <alternativeName>
        <fullName>2-phosphoglycerate dehydratase</fullName>
    </alternativeName>
</protein>